<accession>O88553</accession>
<comment type="function">
    <text>May be involved in transcriptional regulation.</text>
</comment>
<comment type="subcellular location">
    <subcellularLocation>
        <location evidence="4">Nucleus</location>
    </subcellularLocation>
</comment>
<comment type="tissue specificity">
    <text>Expressed in testes, brain, kidney, spleen, thymus, lung, and at low levels in liver.</text>
</comment>
<comment type="similarity">
    <text evidence="4">Belongs to the krueppel C2H2-type zinc-finger protein family.</text>
</comment>
<proteinExistence type="evidence at protein level"/>
<keyword id="KW-0238">DNA-binding</keyword>
<keyword id="KW-0479">Metal-binding</keyword>
<keyword id="KW-0539">Nucleus</keyword>
<keyword id="KW-0597">Phosphoprotein</keyword>
<keyword id="KW-1185">Reference proteome</keyword>
<keyword id="KW-0677">Repeat</keyword>
<keyword id="KW-0804">Transcription</keyword>
<keyword id="KW-0805">Transcription regulation</keyword>
<keyword id="KW-0862">Zinc</keyword>
<keyword id="KW-0863">Zinc-finger</keyword>
<name>ZFP37_RAT</name>
<protein>
    <recommendedName>
        <fullName>Zinc finger protein 37</fullName>
        <shortName>Zfp-37</shortName>
    </recommendedName>
</protein>
<sequence>MATPEPAESDAEWEQLEPGQRNLYKDTKLETCSNPASMGNQDPKQGLVSKLDGEEERWSSVRANKNSSSSLHRLKKTGTSAKVQQDGAQTEGKQKFQRKLTSEVTFRKKSSNSKKSSECTLLEKKNVHSKHDPSEKRLHKSNLYGKNLNQNLDLPSQIKISAKKKPDTANEYRKSLSHSASDVNRDEISTRKKCDKSPNNKLFGKGDKNQTGKKCEKVCRHTASHTKEDKIHTGEKRKSPCRSPSKSDKAPGSGKPYECNQCGKVLSHKQGLLDHQRTHAGEEPYECYECGIAFSQKSHLVVHQKTPTGEKAPYECVQCGKAHGHKHALTDHLRISHTGEKPYKCNECGKTFRHSSNLMQHIRSHTGEKPYECKECGKSFRYNSSFTEHVRTHTGEIPYECNECGKAFKYGSSLTKHMRIHTGEKPFECTECGKTFSKKSHLVIHQRTHTKEKPYKCKECGKAFGHSSSLTYHMRTHTGDCPFECNKCGKAFKQIEGLTQHQRVHTGEKPYECVECGKAFSQKSHLIVHQRTHTGEKPFECYECGKAFNAKSQLVIHQRSHTGEKPYKPYECVECGKAFKQNASLTRHMKTHSEEQSQEED</sequence>
<dbReference type="EMBL" id="AF072439">
    <property type="protein sequence ID" value="AAC24590.1"/>
    <property type="molecule type" value="mRNA"/>
</dbReference>
<dbReference type="SMR" id="O88553"/>
<dbReference type="STRING" id="10116.ENSRNOP00000018209"/>
<dbReference type="iPTMnet" id="O88553"/>
<dbReference type="PhosphoSitePlus" id="O88553"/>
<dbReference type="PaxDb" id="10116-ENSRNOP00000018209"/>
<dbReference type="UCSC" id="RGD:620723">
    <property type="organism name" value="rat"/>
</dbReference>
<dbReference type="AGR" id="RGD:620723"/>
<dbReference type="RGD" id="620723">
    <property type="gene designation" value="Zfp37"/>
</dbReference>
<dbReference type="eggNOG" id="KOG1721">
    <property type="taxonomic scope" value="Eukaryota"/>
</dbReference>
<dbReference type="InParanoid" id="O88553"/>
<dbReference type="PhylomeDB" id="O88553"/>
<dbReference type="PRO" id="PR:O88553"/>
<dbReference type="Proteomes" id="UP000002494">
    <property type="component" value="Unplaced"/>
</dbReference>
<dbReference type="GO" id="GO:0005634">
    <property type="term" value="C:nucleus"/>
    <property type="evidence" value="ECO:0000318"/>
    <property type="project" value="GO_Central"/>
</dbReference>
<dbReference type="GO" id="GO:0000981">
    <property type="term" value="F:DNA-binding transcription factor activity, RNA polymerase II-specific"/>
    <property type="evidence" value="ECO:0000318"/>
    <property type="project" value="GO_Central"/>
</dbReference>
<dbReference type="GO" id="GO:0000977">
    <property type="term" value="F:RNA polymerase II transcription regulatory region sequence-specific DNA binding"/>
    <property type="evidence" value="ECO:0000318"/>
    <property type="project" value="GO_Central"/>
</dbReference>
<dbReference type="GO" id="GO:0008270">
    <property type="term" value="F:zinc ion binding"/>
    <property type="evidence" value="ECO:0007669"/>
    <property type="project" value="UniProtKB-KW"/>
</dbReference>
<dbReference type="GO" id="GO:0030154">
    <property type="term" value="P:cell differentiation"/>
    <property type="evidence" value="ECO:0000270"/>
    <property type="project" value="RGD"/>
</dbReference>
<dbReference type="GO" id="GO:0006357">
    <property type="term" value="P:regulation of transcription by RNA polymerase II"/>
    <property type="evidence" value="ECO:0000318"/>
    <property type="project" value="GO_Central"/>
</dbReference>
<dbReference type="CDD" id="cd07765">
    <property type="entry name" value="KRAB_A-box"/>
    <property type="match status" value="1"/>
</dbReference>
<dbReference type="FunFam" id="3.30.160.60:FF:003774">
    <property type="match status" value="1"/>
</dbReference>
<dbReference type="FunFam" id="3.30.160.60:FF:002295">
    <property type="entry name" value="ZFP37 zinc finger protein"/>
    <property type="match status" value="2"/>
</dbReference>
<dbReference type="FunFam" id="3.30.160.60:FF:000295">
    <property type="entry name" value="zinc finger protein 19"/>
    <property type="match status" value="1"/>
</dbReference>
<dbReference type="FunFam" id="3.30.160.60:FF:000352">
    <property type="entry name" value="zinc finger protein 3 homolog"/>
    <property type="match status" value="1"/>
</dbReference>
<dbReference type="FunFam" id="3.30.160.60:FF:002343">
    <property type="entry name" value="Zinc finger protein 33A"/>
    <property type="match status" value="1"/>
</dbReference>
<dbReference type="FunFam" id="3.30.160.60:FF:001244">
    <property type="entry name" value="Zinc finger protein 37 homolog"/>
    <property type="match status" value="1"/>
</dbReference>
<dbReference type="FunFam" id="3.30.160.60:FF:000016">
    <property type="entry name" value="zinc finger protein 37 homolog"/>
    <property type="match status" value="2"/>
</dbReference>
<dbReference type="FunFam" id="3.30.160.60:FF:001498">
    <property type="entry name" value="Zinc finger protein 404"/>
    <property type="match status" value="1"/>
</dbReference>
<dbReference type="FunFam" id="3.30.160.60:FF:000200">
    <property type="entry name" value="zinc finger protein 510 isoform X2"/>
    <property type="match status" value="1"/>
</dbReference>
<dbReference type="FunFam" id="3.30.160.60:FF:000099">
    <property type="entry name" value="Zinc finger protein 79"/>
    <property type="match status" value="1"/>
</dbReference>
<dbReference type="Gene3D" id="6.10.140.140">
    <property type="match status" value="1"/>
</dbReference>
<dbReference type="Gene3D" id="3.30.160.60">
    <property type="entry name" value="Classic Zinc Finger"/>
    <property type="match status" value="12"/>
</dbReference>
<dbReference type="InterPro" id="IPR001909">
    <property type="entry name" value="KRAB"/>
</dbReference>
<dbReference type="InterPro" id="IPR036051">
    <property type="entry name" value="KRAB_dom_sf"/>
</dbReference>
<dbReference type="InterPro" id="IPR050826">
    <property type="entry name" value="Krueppel_C2H2_ZnFinger"/>
</dbReference>
<dbReference type="InterPro" id="IPR056436">
    <property type="entry name" value="Znf-C2H2_ZIC1-5/GLI1-3-like"/>
</dbReference>
<dbReference type="InterPro" id="IPR036236">
    <property type="entry name" value="Znf_C2H2_sf"/>
</dbReference>
<dbReference type="InterPro" id="IPR013087">
    <property type="entry name" value="Znf_C2H2_type"/>
</dbReference>
<dbReference type="PANTHER" id="PTHR24377">
    <property type="entry name" value="IP01015P-RELATED"/>
    <property type="match status" value="1"/>
</dbReference>
<dbReference type="Pfam" id="PF01352">
    <property type="entry name" value="KRAB"/>
    <property type="match status" value="1"/>
</dbReference>
<dbReference type="Pfam" id="PF00096">
    <property type="entry name" value="zf-C2H2"/>
    <property type="match status" value="8"/>
</dbReference>
<dbReference type="Pfam" id="PF23561">
    <property type="entry name" value="zf-C2H2_15"/>
    <property type="match status" value="1"/>
</dbReference>
<dbReference type="Pfam" id="PF13465">
    <property type="entry name" value="zf-H2C2_2"/>
    <property type="match status" value="1"/>
</dbReference>
<dbReference type="SMART" id="SM00349">
    <property type="entry name" value="KRAB"/>
    <property type="match status" value="1"/>
</dbReference>
<dbReference type="SMART" id="SM00355">
    <property type="entry name" value="ZnF_C2H2"/>
    <property type="match status" value="12"/>
</dbReference>
<dbReference type="SUPFAM" id="SSF57667">
    <property type="entry name" value="beta-beta-alpha zinc fingers"/>
    <property type="match status" value="7"/>
</dbReference>
<dbReference type="SUPFAM" id="SSF109640">
    <property type="entry name" value="KRAB domain (Kruppel-associated box)"/>
    <property type="match status" value="1"/>
</dbReference>
<dbReference type="PROSITE" id="PS50805">
    <property type="entry name" value="KRAB"/>
    <property type="match status" value="1"/>
</dbReference>
<dbReference type="PROSITE" id="PS00028">
    <property type="entry name" value="ZINC_FINGER_C2H2_1"/>
    <property type="match status" value="10"/>
</dbReference>
<dbReference type="PROSITE" id="PS50157">
    <property type="entry name" value="ZINC_FINGER_C2H2_2"/>
    <property type="match status" value="12"/>
</dbReference>
<evidence type="ECO:0000255" key="1">
    <source>
        <dbReference type="PROSITE-ProRule" id="PRU00042"/>
    </source>
</evidence>
<evidence type="ECO:0000255" key="2">
    <source>
        <dbReference type="PROSITE-ProRule" id="PRU00119"/>
    </source>
</evidence>
<evidence type="ECO:0000256" key="3">
    <source>
        <dbReference type="SAM" id="MobiDB-lite"/>
    </source>
</evidence>
<evidence type="ECO:0000305" key="4"/>
<evidence type="ECO:0007744" key="5">
    <source>
    </source>
</evidence>
<reference key="1">
    <citation type="journal article" date="1998" name="Toxicol. Appl. Pharmacol.">
        <title>Identification of a novel peroxisome proliferator responsive cDNA isolated from rat hepatocytes as the zinc-finger protein ZFP-37.</title>
        <authorList>
            <person name="Vanden Heuvel J.P."/>
            <person name="Holden P."/>
            <person name="Tugwood J."/>
            <person name="Ingle C."/>
            <person name="Yen W."/>
            <person name="Galjart N."/>
            <person name="Greenlee W.F."/>
        </authorList>
    </citation>
    <scope>NUCLEOTIDE SEQUENCE [MRNA]</scope>
    <source>
        <strain>Sprague-Dawley</strain>
    </source>
</reference>
<reference key="2">
    <citation type="journal article" date="2012" name="Nat. Commun.">
        <title>Quantitative maps of protein phosphorylation sites across 14 different rat organs and tissues.</title>
        <authorList>
            <person name="Lundby A."/>
            <person name="Secher A."/>
            <person name="Lage K."/>
            <person name="Nordsborg N.B."/>
            <person name="Dmytriyev A."/>
            <person name="Lundby C."/>
            <person name="Olsen J.V."/>
        </authorList>
    </citation>
    <scope>PHOSPHORYLATION [LARGE SCALE ANALYSIS] AT THR-3 AND SER-9</scope>
    <scope>IDENTIFICATION BY MASS SPECTROMETRY [LARGE SCALE ANALYSIS]</scope>
</reference>
<organism>
    <name type="scientific">Rattus norvegicus</name>
    <name type="common">Rat</name>
    <dbReference type="NCBI Taxonomy" id="10116"/>
    <lineage>
        <taxon>Eukaryota</taxon>
        <taxon>Metazoa</taxon>
        <taxon>Chordata</taxon>
        <taxon>Craniata</taxon>
        <taxon>Vertebrata</taxon>
        <taxon>Euteleostomi</taxon>
        <taxon>Mammalia</taxon>
        <taxon>Eutheria</taxon>
        <taxon>Euarchontoglires</taxon>
        <taxon>Glires</taxon>
        <taxon>Rodentia</taxon>
        <taxon>Myomorpha</taxon>
        <taxon>Muroidea</taxon>
        <taxon>Muridae</taxon>
        <taxon>Murinae</taxon>
        <taxon>Rattus</taxon>
    </lineage>
</organism>
<feature type="chain" id="PRO_0000047295" description="Zinc finger protein 37">
    <location>
        <begin position="1"/>
        <end position="601"/>
    </location>
</feature>
<feature type="domain" description="KRAB" evidence="2">
    <location>
        <begin position="1"/>
        <end position="70"/>
    </location>
</feature>
<feature type="zinc finger region" description="C2H2-type 1" evidence="1">
    <location>
        <begin position="257"/>
        <end position="279"/>
    </location>
</feature>
<feature type="zinc finger region" description="C2H2-type 2; atypical" evidence="1">
    <location>
        <begin position="285"/>
        <end position="303"/>
    </location>
</feature>
<feature type="zinc finger region" description="C2H2-type 3" evidence="1">
    <location>
        <begin position="314"/>
        <end position="337"/>
    </location>
</feature>
<feature type="zinc finger region" description="C2H2-type 4" evidence="1">
    <location>
        <begin position="343"/>
        <end position="365"/>
    </location>
</feature>
<feature type="zinc finger region" description="C2H2-type 5" evidence="1">
    <location>
        <begin position="371"/>
        <end position="393"/>
    </location>
</feature>
<feature type="zinc finger region" description="C2H2-type 6" evidence="1">
    <location>
        <begin position="399"/>
        <end position="421"/>
    </location>
</feature>
<feature type="zinc finger region" description="C2H2-type 7" evidence="1">
    <location>
        <begin position="427"/>
        <end position="449"/>
    </location>
</feature>
<feature type="zinc finger region" description="C2H2-type 8" evidence="1">
    <location>
        <begin position="455"/>
        <end position="477"/>
    </location>
</feature>
<feature type="zinc finger region" description="C2H2-type 9" evidence="1">
    <location>
        <begin position="483"/>
        <end position="505"/>
    </location>
</feature>
<feature type="zinc finger region" description="C2H2-type 10" evidence="1">
    <location>
        <begin position="511"/>
        <end position="533"/>
    </location>
</feature>
<feature type="zinc finger region" description="C2H2-type 11" evidence="1">
    <location>
        <begin position="539"/>
        <end position="561"/>
    </location>
</feature>
<feature type="zinc finger region" description="C2H2-type 12" evidence="1">
    <location>
        <begin position="570"/>
        <end position="592"/>
    </location>
</feature>
<feature type="region of interest" description="Disordered" evidence="3">
    <location>
        <begin position="30"/>
        <end position="254"/>
    </location>
</feature>
<feature type="compositionally biased region" description="Polar residues" evidence="3">
    <location>
        <begin position="30"/>
        <end position="43"/>
    </location>
</feature>
<feature type="compositionally biased region" description="Low complexity" evidence="3">
    <location>
        <begin position="60"/>
        <end position="70"/>
    </location>
</feature>
<feature type="compositionally biased region" description="Polar residues" evidence="3">
    <location>
        <begin position="77"/>
        <end position="88"/>
    </location>
</feature>
<feature type="compositionally biased region" description="Basic and acidic residues" evidence="3">
    <location>
        <begin position="115"/>
        <end position="136"/>
    </location>
</feature>
<feature type="compositionally biased region" description="Basic and acidic residues" evidence="3">
    <location>
        <begin position="164"/>
        <end position="174"/>
    </location>
</feature>
<feature type="compositionally biased region" description="Basic and acidic residues" evidence="3">
    <location>
        <begin position="183"/>
        <end position="238"/>
    </location>
</feature>
<feature type="modified residue" description="Phosphothreonine" evidence="5">
    <location>
        <position position="3"/>
    </location>
</feature>
<feature type="modified residue" description="Phosphoserine" evidence="5">
    <location>
        <position position="9"/>
    </location>
</feature>
<gene>
    <name type="primary">Zfp37</name>
</gene>